<reference key="1">
    <citation type="journal article" date="2005" name="Genome Res.">
        <title>Comparative genome sequencing of Drosophila pseudoobscura: chromosomal, gene, and cis-element evolution.</title>
        <authorList>
            <person name="Richards S."/>
            <person name="Liu Y."/>
            <person name="Bettencourt B.R."/>
            <person name="Hradecky P."/>
            <person name="Letovsky S."/>
            <person name="Nielsen R."/>
            <person name="Thornton K."/>
            <person name="Hubisz M.J."/>
            <person name="Chen R."/>
            <person name="Meisel R.P."/>
            <person name="Couronne O."/>
            <person name="Hua S."/>
            <person name="Smith M.A."/>
            <person name="Zhang P."/>
            <person name="Liu J."/>
            <person name="Bussemaker H.J."/>
            <person name="van Batenburg M.F."/>
            <person name="Howells S.L."/>
            <person name="Scherer S.E."/>
            <person name="Sodergren E."/>
            <person name="Matthews B.B."/>
            <person name="Crosby M.A."/>
            <person name="Schroeder A.J."/>
            <person name="Ortiz-Barrientos D."/>
            <person name="Rives C.M."/>
            <person name="Metzker M.L."/>
            <person name="Muzny D.M."/>
            <person name="Scott G."/>
            <person name="Steffen D."/>
            <person name="Wheeler D.A."/>
            <person name="Worley K.C."/>
            <person name="Havlak P."/>
            <person name="Durbin K.J."/>
            <person name="Egan A."/>
            <person name="Gill R."/>
            <person name="Hume J."/>
            <person name="Morgan M.B."/>
            <person name="Miner G."/>
            <person name="Hamilton C."/>
            <person name="Huang Y."/>
            <person name="Waldron L."/>
            <person name="Verduzco D."/>
            <person name="Clerc-Blankenburg K.P."/>
            <person name="Dubchak I."/>
            <person name="Noor M.A.F."/>
            <person name="Anderson W."/>
            <person name="White K.P."/>
            <person name="Clark A.G."/>
            <person name="Schaeffer S.W."/>
            <person name="Gelbart W.M."/>
            <person name="Weinstock G.M."/>
            <person name="Gibbs R.A."/>
        </authorList>
    </citation>
    <scope>NUCLEOTIDE SEQUENCE [LARGE SCALE GENOMIC DNA]</scope>
    <source>
        <strain>MV2-25 / Tucson 14011-0121.94</strain>
    </source>
</reference>
<proteinExistence type="inferred from homology"/>
<name>KTU_DROPS</name>
<evidence type="ECO:0000250" key="1">
    <source>
        <dbReference type="UniProtKB" id="Q0E9G3"/>
    </source>
</evidence>
<evidence type="ECO:0000255" key="2">
    <source>
        <dbReference type="HAMAP-Rule" id="MF_03069"/>
    </source>
</evidence>
<evidence type="ECO:0000256" key="3">
    <source>
        <dbReference type="SAM" id="MobiDB-lite"/>
    </source>
</evidence>
<keyword id="KW-0963">Cytoplasm</keyword>
<keyword id="KW-0597">Phosphoprotein</keyword>
<keyword id="KW-1185">Reference proteome</keyword>
<organism>
    <name type="scientific">Drosophila pseudoobscura pseudoobscura</name>
    <name type="common">Fruit fly</name>
    <dbReference type="NCBI Taxonomy" id="46245"/>
    <lineage>
        <taxon>Eukaryota</taxon>
        <taxon>Metazoa</taxon>
        <taxon>Ecdysozoa</taxon>
        <taxon>Arthropoda</taxon>
        <taxon>Hexapoda</taxon>
        <taxon>Insecta</taxon>
        <taxon>Pterygota</taxon>
        <taxon>Neoptera</taxon>
        <taxon>Endopterygota</taxon>
        <taxon>Diptera</taxon>
        <taxon>Brachycera</taxon>
        <taxon>Muscomorpha</taxon>
        <taxon>Ephydroidea</taxon>
        <taxon>Drosophilidae</taxon>
        <taxon>Drosophila</taxon>
        <taxon>Sophophora</taxon>
    </lineage>
</organism>
<comment type="function">
    <text evidence="2">Required for cytoplasmic pre-assembly of axonemal dyneins, thereby playing a central role in motility in cilia and flagella. Involved in pre-assembly of dynein arm complexes in the cytoplasm before intraflagellar transport loads them for the ciliary compartment.</text>
</comment>
<comment type="subunit">
    <text evidence="2">Interacts with Pp1alpha-96A, Pp1-87B, Pp1-13C and flw.</text>
</comment>
<comment type="subcellular location">
    <subcellularLocation>
        <location evidence="2">Cytoplasm</location>
    </subcellularLocation>
</comment>
<comment type="similarity">
    <text evidence="2">Belongs to the PIH1 family. Kintoun subfamily.</text>
</comment>
<accession>Q292G3</accession>
<gene>
    <name evidence="2" type="primary">Nop17l</name>
    <name evidence="2" type="synonym">Ppi20</name>
    <name type="ORF">GA13787</name>
</gene>
<dbReference type="EMBL" id="CM000071">
    <property type="protein sequence ID" value="EAL24899.2"/>
    <property type="molecule type" value="Genomic_DNA"/>
</dbReference>
<dbReference type="RefSeq" id="XP_001360324.2">
    <property type="nucleotide sequence ID" value="XM_001360287.3"/>
</dbReference>
<dbReference type="RefSeq" id="XP_015039219.1">
    <property type="nucleotide sequence ID" value="XM_015183733.1"/>
</dbReference>
<dbReference type="SMR" id="Q292G3"/>
<dbReference type="FunCoup" id="Q292G3">
    <property type="interactions" value="390"/>
</dbReference>
<dbReference type="STRING" id="46245.Q292G3"/>
<dbReference type="EnsemblMetazoa" id="FBtr0278986">
    <property type="protein sequence ID" value="FBpp0277424"/>
    <property type="gene ID" value="FBgn0073823"/>
</dbReference>
<dbReference type="EnsemblMetazoa" id="FBtr0368564">
    <property type="protein sequence ID" value="FBpp0331303"/>
    <property type="gene ID" value="FBgn0073823"/>
</dbReference>
<dbReference type="GeneID" id="4803636"/>
<dbReference type="KEGG" id="dpo:4803636"/>
<dbReference type="CTD" id="35730"/>
<dbReference type="eggNOG" id="KOG4356">
    <property type="taxonomic scope" value="Eukaryota"/>
</dbReference>
<dbReference type="HOGENOM" id="CLU_012715_0_0_1"/>
<dbReference type="InParanoid" id="Q292G3"/>
<dbReference type="OMA" id="CFLNISK"/>
<dbReference type="Proteomes" id="UP000001819">
    <property type="component" value="Chromosome 3"/>
</dbReference>
<dbReference type="Bgee" id="FBgn0073823">
    <property type="expression patterns" value="Expressed in female reproductive system and 3 other cell types or tissues"/>
</dbReference>
<dbReference type="GO" id="GO:0005737">
    <property type="term" value="C:cytoplasm"/>
    <property type="evidence" value="ECO:0007669"/>
    <property type="project" value="UniProtKB-SubCell"/>
</dbReference>
<dbReference type="GO" id="GO:0070286">
    <property type="term" value="P:axonemal dynein complex assembly"/>
    <property type="evidence" value="ECO:0007669"/>
    <property type="project" value="UniProtKB-UniRule"/>
</dbReference>
<dbReference type="GO" id="GO:0060285">
    <property type="term" value="P:cilium-dependent cell motility"/>
    <property type="evidence" value="ECO:0007669"/>
    <property type="project" value="UniProtKB-UniRule"/>
</dbReference>
<dbReference type="HAMAP" id="MF_03069">
    <property type="entry name" value="Kintoun"/>
    <property type="match status" value="1"/>
</dbReference>
<dbReference type="InterPro" id="IPR034727">
    <property type="entry name" value="Kintoun"/>
</dbReference>
<dbReference type="InterPro" id="IPR050734">
    <property type="entry name" value="PIH1/Kintoun_subfamily"/>
</dbReference>
<dbReference type="InterPro" id="IPR012981">
    <property type="entry name" value="PIH1_N"/>
</dbReference>
<dbReference type="InterPro" id="IPR041442">
    <property type="entry name" value="PIH1D1/2/3_CS-like"/>
</dbReference>
<dbReference type="PANTHER" id="PTHR22997">
    <property type="entry name" value="PIH1 DOMAIN-CONTAINING PROTEIN 1"/>
    <property type="match status" value="1"/>
</dbReference>
<dbReference type="PANTHER" id="PTHR22997:SF3">
    <property type="entry name" value="PROTEIN KINTOUN"/>
    <property type="match status" value="1"/>
</dbReference>
<dbReference type="Pfam" id="PF08190">
    <property type="entry name" value="PIH1"/>
    <property type="match status" value="1"/>
</dbReference>
<dbReference type="Pfam" id="PF18201">
    <property type="entry name" value="PIH1_CS"/>
    <property type="match status" value="1"/>
</dbReference>
<protein>
    <recommendedName>
        <fullName evidence="2">Protein kintoun</fullName>
    </recommendedName>
    <alternativeName>
        <fullName evidence="2">Dynein assembly factor 2, axonemal homolog</fullName>
    </alternativeName>
    <alternativeName>
        <fullName evidence="2">PP1-interacting protein 20</fullName>
    </alternativeName>
</protein>
<sequence>MSTAAGSRKKHSKLHNEERADITKDEFEAIREALSKEEFRKLFFDYVEEVQDPENRKIYEQEITQLEKERGVDIKFVHPKPGFVVKTSIDGELKCFINIASSPEVARPNSEVGMNPETGGRGLSWSIPMAQTGGRDDCDAKNNHCKVFDVVFHPDALHLSTRDSQFRKALIDTALDAVEREYEVALDRANLKYPKLDYKGIARPTVIRKLAANPTPEEQEPHPLEHMYPTKPPASNSEPKILPMKTKAAPVPEFAVPKYSIKQSHDVDLSEYTDELDAKLHVTVPRSLVVEIELPLLRSTAECQLDVTAKSVYLLSERLGAKYRLKLDLPFVVDDKAGNARFDTEKRRLSITLPVVRKSVNQQRQMHDTLRYLSREDSGVELHSNSESPVEDDADGYMPETPELETAAPPDPPALTPSTFLKDSVHYQLPKFDCNALDNAMAFVLDVAHVQPDSIVTLKTDRSVSVKFATIGSGYYPTHYAFYMELPSVDMEEYHKDHCIESIEAEAWDNNVIMKLFLGAESKAPTSYLAGLHANGLKEYQVYGHYKAKTDKNNECEPNPPRDVQIMRTDDAVVITVRPPHTSITTEEDDEQQQQLHKKPSKKQRKRNKKQRSYSESACEEMLDQQDGPLGRKKDATTPMVPQRKQRSYSECNDSTIGSENVNRGILKRFSRYGPRPSMSDSCSSIDDCGFSSHSCSVDASSSLFSQSFNGIPEEDRTEEGLSESCKKTVRFNDQIMKQVFRHDSSILGQRKKNQKRRNCKLRAQQRRLSEGDSADYEETRDTALKQQGEPSGNKLHDSGLDLTGASASHRTDNNSKSYRTRQDHADADAKNDAMMFEMDDEDDEI</sequence>
<feature type="chain" id="PRO_0000365810" description="Protein kintoun">
    <location>
        <begin position="1"/>
        <end position="846"/>
    </location>
</feature>
<feature type="region of interest" description="Disordered" evidence="3">
    <location>
        <begin position="1"/>
        <end position="21"/>
    </location>
</feature>
<feature type="region of interest" description="Disordered" evidence="3">
    <location>
        <begin position="377"/>
        <end position="412"/>
    </location>
</feature>
<feature type="region of interest" description="Disordered" evidence="3">
    <location>
        <begin position="581"/>
        <end position="657"/>
    </location>
</feature>
<feature type="region of interest" description="Disordered" evidence="3">
    <location>
        <begin position="743"/>
        <end position="846"/>
    </location>
</feature>
<feature type="compositionally biased region" description="Low complexity" evidence="3">
    <location>
        <begin position="399"/>
        <end position="408"/>
    </location>
</feature>
<feature type="compositionally biased region" description="Basic residues" evidence="3">
    <location>
        <begin position="596"/>
        <end position="612"/>
    </location>
</feature>
<feature type="compositionally biased region" description="Basic residues" evidence="3">
    <location>
        <begin position="750"/>
        <end position="766"/>
    </location>
</feature>
<feature type="compositionally biased region" description="Basic and acidic residues" evidence="3">
    <location>
        <begin position="821"/>
        <end position="832"/>
    </location>
</feature>
<feature type="modified residue" description="Phosphoserine" evidence="1">
    <location>
        <position position="378"/>
    </location>
</feature>
<feature type="modified residue" description="Phosphoserine" evidence="1">
    <location>
        <position position="770"/>
    </location>
</feature>